<protein>
    <recommendedName>
        <fullName evidence="1">Small ribosomal subunit protein uS7</fullName>
    </recommendedName>
    <alternativeName>
        <fullName evidence="2">30S ribosomal protein S7</fullName>
    </alternativeName>
</protein>
<dbReference type="EMBL" id="CP000414">
    <property type="protein sequence ID" value="ABJ61319.1"/>
    <property type="molecule type" value="Genomic_DNA"/>
</dbReference>
<dbReference type="RefSeq" id="WP_011679126.1">
    <property type="nucleotide sequence ID" value="NC_008531.1"/>
</dbReference>
<dbReference type="SMR" id="Q03ZQ3"/>
<dbReference type="EnsemblBacteria" id="ABJ61319">
    <property type="protein sequence ID" value="ABJ61319"/>
    <property type="gene ID" value="LEUM_0188"/>
</dbReference>
<dbReference type="GeneID" id="97504989"/>
<dbReference type="KEGG" id="lme:LEUM_0188"/>
<dbReference type="eggNOG" id="COG0049">
    <property type="taxonomic scope" value="Bacteria"/>
</dbReference>
<dbReference type="HOGENOM" id="CLU_072226_1_1_9"/>
<dbReference type="Proteomes" id="UP000000362">
    <property type="component" value="Chromosome"/>
</dbReference>
<dbReference type="GO" id="GO:0015935">
    <property type="term" value="C:small ribosomal subunit"/>
    <property type="evidence" value="ECO:0007669"/>
    <property type="project" value="InterPro"/>
</dbReference>
<dbReference type="GO" id="GO:0019843">
    <property type="term" value="F:rRNA binding"/>
    <property type="evidence" value="ECO:0007669"/>
    <property type="project" value="UniProtKB-UniRule"/>
</dbReference>
<dbReference type="GO" id="GO:0003735">
    <property type="term" value="F:structural constituent of ribosome"/>
    <property type="evidence" value="ECO:0007669"/>
    <property type="project" value="InterPro"/>
</dbReference>
<dbReference type="GO" id="GO:0000049">
    <property type="term" value="F:tRNA binding"/>
    <property type="evidence" value="ECO:0007669"/>
    <property type="project" value="UniProtKB-UniRule"/>
</dbReference>
<dbReference type="GO" id="GO:0006412">
    <property type="term" value="P:translation"/>
    <property type="evidence" value="ECO:0007669"/>
    <property type="project" value="UniProtKB-UniRule"/>
</dbReference>
<dbReference type="CDD" id="cd14869">
    <property type="entry name" value="uS7_Bacteria"/>
    <property type="match status" value="1"/>
</dbReference>
<dbReference type="FunFam" id="1.10.455.10:FF:000001">
    <property type="entry name" value="30S ribosomal protein S7"/>
    <property type="match status" value="1"/>
</dbReference>
<dbReference type="Gene3D" id="1.10.455.10">
    <property type="entry name" value="Ribosomal protein S7 domain"/>
    <property type="match status" value="1"/>
</dbReference>
<dbReference type="HAMAP" id="MF_00480_B">
    <property type="entry name" value="Ribosomal_uS7_B"/>
    <property type="match status" value="1"/>
</dbReference>
<dbReference type="InterPro" id="IPR000235">
    <property type="entry name" value="Ribosomal_uS7"/>
</dbReference>
<dbReference type="InterPro" id="IPR005717">
    <property type="entry name" value="Ribosomal_uS7_bac/org-type"/>
</dbReference>
<dbReference type="InterPro" id="IPR020606">
    <property type="entry name" value="Ribosomal_uS7_CS"/>
</dbReference>
<dbReference type="InterPro" id="IPR023798">
    <property type="entry name" value="Ribosomal_uS7_dom"/>
</dbReference>
<dbReference type="InterPro" id="IPR036823">
    <property type="entry name" value="Ribosomal_uS7_dom_sf"/>
</dbReference>
<dbReference type="NCBIfam" id="TIGR01029">
    <property type="entry name" value="rpsG_bact"/>
    <property type="match status" value="1"/>
</dbReference>
<dbReference type="PANTHER" id="PTHR11205">
    <property type="entry name" value="RIBOSOMAL PROTEIN S7"/>
    <property type="match status" value="1"/>
</dbReference>
<dbReference type="Pfam" id="PF00177">
    <property type="entry name" value="Ribosomal_S7"/>
    <property type="match status" value="1"/>
</dbReference>
<dbReference type="PIRSF" id="PIRSF002122">
    <property type="entry name" value="RPS7p_RPS7a_RPS5e_RPS7o"/>
    <property type="match status" value="1"/>
</dbReference>
<dbReference type="SUPFAM" id="SSF47973">
    <property type="entry name" value="Ribosomal protein S7"/>
    <property type="match status" value="1"/>
</dbReference>
<dbReference type="PROSITE" id="PS00052">
    <property type="entry name" value="RIBOSOMAL_S7"/>
    <property type="match status" value="1"/>
</dbReference>
<accession>Q03ZQ3</accession>
<comment type="function">
    <text evidence="1">One of the primary rRNA binding proteins, it binds directly to 16S rRNA where it nucleates assembly of the head domain of the 30S subunit. Is located at the subunit interface close to the decoding center, probably blocks exit of the E-site tRNA.</text>
</comment>
<comment type="subunit">
    <text evidence="1">Part of the 30S ribosomal subunit. Contacts proteins S9 and S11.</text>
</comment>
<comment type="similarity">
    <text evidence="1">Belongs to the universal ribosomal protein uS7 family.</text>
</comment>
<reference key="1">
    <citation type="journal article" date="2006" name="Proc. Natl. Acad. Sci. U.S.A.">
        <title>Comparative genomics of the lactic acid bacteria.</title>
        <authorList>
            <person name="Makarova K.S."/>
            <person name="Slesarev A."/>
            <person name="Wolf Y.I."/>
            <person name="Sorokin A."/>
            <person name="Mirkin B."/>
            <person name="Koonin E.V."/>
            <person name="Pavlov A."/>
            <person name="Pavlova N."/>
            <person name="Karamychev V."/>
            <person name="Polouchine N."/>
            <person name="Shakhova V."/>
            <person name="Grigoriev I."/>
            <person name="Lou Y."/>
            <person name="Rohksar D."/>
            <person name="Lucas S."/>
            <person name="Huang K."/>
            <person name="Goodstein D.M."/>
            <person name="Hawkins T."/>
            <person name="Plengvidhya V."/>
            <person name="Welker D."/>
            <person name="Hughes J."/>
            <person name="Goh Y."/>
            <person name="Benson A."/>
            <person name="Baldwin K."/>
            <person name="Lee J.-H."/>
            <person name="Diaz-Muniz I."/>
            <person name="Dosti B."/>
            <person name="Smeianov V."/>
            <person name="Wechter W."/>
            <person name="Barabote R."/>
            <person name="Lorca G."/>
            <person name="Altermann E."/>
            <person name="Barrangou R."/>
            <person name="Ganesan B."/>
            <person name="Xie Y."/>
            <person name="Rawsthorne H."/>
            <person name="Tamir D."/>
            <person name="Parker C."/>
            <person name="Breidt F."/>
            <person name="Broadbent J.R."/>
            <person name="Hutkins R."/>
            <person name="O'Sullivan D."/>
            <person name="Steele J."/>
            <person name="Unlu G."/>
            <person name="Saier M.H. Jr."/>
            <person name="Klaenhammer T."/>
            <person name="Richardson P."/>
            <person name="Kozyavkin S."/>
            <person name="Weimer B.C."/>
            <person name="Mills D.A."/>
        </authorList>
    </citation>
    <scope>NUCLEOTIDE SEQUENCE [LARGE SCALE GENOMIC DNA]</scope>
    <source>
        <strain>ATCC 8293 / DSM 20343 / BCRC 11652 / CCM 1803 / JCM 6124 / NCDO 523 / NBRC 100496 / NCIMB 8023 / NCTC 12954 / NRRL B-1118 / 37Y</strain>
    </source>
</reference>
<name>RS7_LEUMM</name>
<keyword id="KW-1185">Reference proteome</keyword>
<keyword id="KW-0687">Ribonucleoprotein</keyword>
<keyword id="KW-0689">Ribosomal protein</keyword>
<keyword id="KW-0694">RNA-binding</keyword>
<keyword id="KW-0699">rRNA-binding</keyword>
<keyword id="KW-0820">tRNA-binding</keyword>
<evidence type="ECO:0000255" key="1">
    <source>
        <dbReference type="HAMAP-Rule" id="MF_00480"/>
    </source>
</evidence>
<evidence type="ECO:0000305" key="2"/>
<organism>
    <name type="scientific">Leuconostoc mesenteroides subsp. mesenteroides (strain ATCC 8293 / DSM 20343 / BCRC 11652 / CCM 1803 / JCM 6124 / NCDO 523 / NBRC 100496 / NCIMB 8023 / NCTC 12954 / NRRL B-1118 / 37Y)</name>
    <dbReference type="NCBI Taxonomy" id="203120"/>
    <lineage>
        <taxon>Bacteria</taxon>
        <taxon>Bacillati</taxon>
        <taxon>Bacillota</taxon>
        <taxon>Bacilli</taxon>
        <taxon>Lactobacillales</taxon>
        <taxon>Lactobacillaceae</taxon>
        <taxon>Leuconostoc</taxon>
    </lineage>
</organism>
<proteinExistence type="inferred from homology"/>
<gene>
    <name evidence="1" type="primary">rpsG</name>
    <name type="ordered locus">LEUM_0188</name>
</gene>
<sequence>MPRKGYTKRQEILPDPIYNSKLVSRLINKLMLDGKRGTASTILYDAFDRIKEATGNDPLEVFEQAMENIMPVLEVKARRVGGSNYQVPIEVRPDRRSTLGLRWLVNYSRLRNEHTMDERLAKEIMDAANDTGASVKKREDTHKMAEANRAFAHYRW</sequence>
<feature type="chain" id="PRO_1000014220" description="Small ribosomal subunit protein uS7">
    <location>
        <begin position="1"/>
        <end position="156"/>
    </location>
</feature>